<evidence type="ECO:0000250" key="1">
    <source>
        <dbReference type="UniProtKB" id="Q9NV64"/>
    </source>
</evidence>
<evidence type="ECO:0000255" key="2"/>
<evidence type="ECO:0000305" key="3"/>
<reference key="1">
    <citation type="submission" date="2006-08" db="EMBL/GenBank/DDBJ databases">
        <authorList>
            <consortium name="NIH - Mammalian Gene Collection (MGC) project"/>
        </authorList>
    </citation>
    <scope>NUCLEOTIDE SEQUENCE [LARGE SCALE MRNA]</scope>
    <source>
        <strain>Hereford</strain>
        <tissue>Fetal lung</tissue>
    </source>
</reference>
<keyword id="KW-0072">Autophagy</keyword>
<keyword id="KW-0256">Endoplasmic reticulum</keyword>
<keyword id="KW-0325">Glycoprotein</keyword>
<keyword id="KW-0472">Membrane</keyword>
<keyword id="KW-1185">Reference proteome</keyword>
<keyword id="KW-0812">Transmembrane</keyword>
<keyword id="KW-1133">Transmembrane helix</keyword>
<gene>
    <name type="primary">TMEM39A</name>
</gene>
<comment type="function">
    <text evidence="1">Regulates autophagy by controlling the spatial distribution and levels of the intracellular phosphatidylinositol 4-phosphate (PtdIns(4)P) pools (By similarity). Modulates (PtdIns(4)P) levels by regulating the ER-to-Golgi trafficking of the phosphatidylinositide phosphatase SACM1L (By similarity).</text>
</comment>
<comment type="subunit">
    <text evidence="1">Interacts with SACM1L, SEC23A and SEC24A.</text>
</comment>
<comment type="subcellular location">
    <subcellularLocation>
        <location evidence="1">Endoplasmic reticulum membrane</location>
        <topology evidence="2">Multi-pass membrane protein</topology>
    </subcellularLocation>
</comment>
<comment type="similarity">
    <text evidence="3">Belongs to the TMEM39 family.</text>
</comment>
<protein>
    <recommendedName>
        <fullName>Transmembrane protein 39A</fullName>
    </recommendedName>
</protein>
<organism>
    <name type="scientific">Bos taurus</name>
    <name type="common">Bovine</name>
    <dbReference type="NCBI Taxonomy" id="9913"/>
    <lineage>
        <taxon>Eukaryota</taxon>
        <taxon>Metazoa</taxon>
        <taxon>Chordata</taxon>
        <taxon>Craniata</taxon>
        <taxon>Vertebrata</taxon>
        <taxon>Euteleostomi</taxon>
        <taxon>Mammalia</taxon>
        <taxon>Eutheria</taxon>
        <taxon>Laurasiatheria</taxon>
        <taxon>Artiodactyla</taxon>
        <taxon>Ruminantia</taxon>
        <taxon>Pecora</taxon>
        <taxon>Bovidae</taxon>
        <taxon>Bovinae</taxon>
        <taxon>Bos</taxon>
    </lineage>
</organism>
<proteinExistence type="evidence at transcript level"/>
<dbReference type="EMBL" id="BC120195">
    <property type="protein sequence ID" value="AAI20196.1"/>
    <property type="molecule type" value="mRNA"/>
</dbReference>
<dbReference type="RefSeq" id="NP_001069828.1">
    <property type="nucleotide sequence ID" value="NM_001076360.2"/>
</dbReference>
<dbReference type="FunCoup" id="Q0VCF5">
    <property type="interactions" value="3079"/>
</dbReference>
<dbReference type="STRING" id="9913.ENSBTAP00000059806"/>
<dbReference type="GlyCosmos" id="Q0VCF5">
    <property type="glycosylation" value="2 sites, No reported glycans"/>
</dbReference>
<dbReference type="GlyGen" id="Q0VCF5">
    <property type="glycosylation" value="2 sites"/>
</dbReference>
<dbReference type="PaxDb" id="9913-ENSBTAP00000000254"/>
<dbReference type="Ensembl" id="ENSBTAT00000000254.5">
    <property type="protein sequence ID" value="ENSBTAP00000000254.4"/>
    <property type="gene ID" value="ENSBTAG00000000213.6"/>
</dbReference>
<dbReference type="GeneID" id="615128"/>
<dbReference type="KEGG" id="bta:615128"/>
<dbReference type="CTD" id="55254"/>
<dbReference type="VEuPathDB" id="HostDB:ENSBTAG00000000213"/>
<dbReference type="VGNC" id="VGNC:36082">
    <property type="gene designation" value="TMEM39A"/>
</dbReference>
<dbReference type="eggNOG" id="KOG3828">
    <property type="taxonomic scope" value="Eukaryota"/>
</dbReference>
<dbReference type="GeneTree" id="ENSGT00390000018895"/>
<dbReference type="HOGENOM" id="CLU_028992_0_0_1"/>
<dbReference type="InParanoid" id="Q0VCF5"/>
<dbReference type="OrthoDB" id="5862608at2759"/>
<dbReference type="TreeFam" id="TF321110"/>
<dbReference type="Proteomes" id="UP000009136">
    <property type="component" value="Chromosome 1"/>
</dbReference>
<dbReference type="Bgee" id="ENSBTAG00000000213">
    <property type="expression patterns" value="Expressed in oocyte and 106 other cell types or tissues"/>
</dbReference>
<dbReference type="GO" id="GO:0005789">
    <property type="term" value="C:endoplasmic reticulum membrane"/>
    <property type="evidence" value="ECO:0000250"/>
    <property type="project" value="UniProtKB"/>
</dbReference>
<dbReference type="GO" id="GO:0006914">
    <property type="term" value="P:autophagy"/>
    <property type="evidence" value="ECO:0007669"/>
    <property type="project" value="UniProtKB-KW"/>
</dbReference>
<dbReference type="GO" id="GO:1902902">
    <property type="term" value="P:negative regulation of autophagosome assembly"/>
    <property type="evidence" value="ECO:0000250"/>
    <property type="project" value="UniProtKB"/>
</dbReference>
<dbReference type="GO" id="GO:1901097">
    <property type="term" value="P:negative regulation of autophagosome maturation"/>
    <property type="evidence" value="ECO:0000250"/>
    <property type="project" value="UniProtKB"/>
</dbReference>
<dbReference type="InterPro" id="IPR019397">
    <property type="entry name" value="Uncharacterised_TMEM39"/>
</dbReference>
<dbReference type="PANTHER" id="PTHR12995">
    <property type="entry name" value="FI21814P1"/>
    <property type="match status" value="1"/>
</dbReference>
<dbReference type="PANTHER" id="PTHR12995:SF3">
    <property type="entry name" value="TRANSMEMBRANE PROTEIN 39A"/>
    <property type="match status" value="1"/>
</dbReference>
<dbReference type="Pfam" id="PF10271">
    <property type="entry name" value="Tmp39"/>
    <property type="match status" value="1"/>
</dbReference>
<feature type="chain" id="PRO_0000279223" description="Transmembrane protein 39A">
    <location>
        <begin position="1"/>
        <end position="488"/>
    </location>
</feature>
<feature type="transmembrane region" description="Helical" evidence="2">
    <location>
        <begin position="72"/>
        <end position="92"/>
    </location>
</feature>
<feature type="transmembrane region" description="Helical" evidence="2">
    <location>
        <begin position="110"/>
        <end position="130"/>
    </location>
</feature>
<feature type="transmembrane region" description="Helical" evidence="2">
    <location>
        <begin position="154"/>
        <end position="174"/>
    </location>
</feature>
<feature type="transmembrane region" description="Helical" evidence="2">
    <location>
        <begin position="182"/>
        <end position="202"/>
    </location>
</feature>
<feature type="transmembrane region" description="Helical" evidence="2">
    <location>
        <begin position="287"/>
        <end position="307"/>
    </location>
</feature>
<feature type="transmembrane region" description="Helical" evidence="2">
    <location>
        <begin position="319"/>
        <end position="339"/>
    </location>
</feature>
<feature type="transmembrane region" description="Helical" evidence="2">
    <location>
        <begin position="420"/>
        <end position="440"/>
    </location>
</feature>
<feature type="transmembrane region" description="Helical" evidence="2">
    <location>
        <begin position="446"/>
        <end position="466"/>
    </location>
</feature>
<feature type="glycosylation site" description="N-linked (GlcNAc...) asparagine" evidence="2">
    <location>
        <position position="31"/>
    </location>
</feature>
<feature type="glycosylation site" description="N-linked (GlcNAc...) asparagine" evidence="2">
    <location>
        <position position="39"/>
    </location>
</feature>
<name>TM39A_BOVIN</name>
<accession>Q0VCF5</accession>
<sequence length="488" mass="55617">MPGGRRGPSRQQLSRSALPSLQTLVGGGCGNGTGLRNRNGSAIGLPVPPITALITPGPVRHCQIPDLPVDGSLLFEFLFFIYLLVALFIQYINIYKTVWWYPYNHPASCTSLNFHLIDYHLAAFITVMLARRLVWALISEATKAGASSMIHYMVLISARLVLLTLCGWVLCWTLVNLFRSHSVLNLLFLGYPFGVYVPLCCFHQDSRAHLLLTDFPYAVQHQAVEESASTVGGLARSKDFLSLLLESLKEQFNNATPIPTHSCPLSPDLIRNEVECLKADFNHRIKEVLFNSLFSAYYVAFLPLCFVKSTQYYDMRWSCEHLIMVWINAFVMLTTQLLPSKYCDLLHKSAAHLGKWQKLEHGSYSNAPQHIWSENTIWPQGVLVRHSRCLYRAVGPYNVAVPSDVSHARFYFLFHRPLRLLNLLILIEGSVVFYQLYSLLRSEKWNHTLSMALILFCNYYVLFKLLRDRIVLGRAYSYPLNSYELKAN</sequence>